<proteinExistence type="evidence at protein level"/>
<dbReference type="EMBL" id="Z75097">
    <property type="protein sequence ID" value="CAA99398.1"/>
    <property type="molecule type" value="Genomic_DNA"/>
</dbReference>
<dbReference type="EMBL" id="BK006948">
    <property type="protein sequence ID" value="DAA10961.1"/>
    <property type="molecule type" value="Genomic_DNA"/>
</dbReference>
<dbReference type="PIR" id="S67081">
    <property type="entry name" value="S67081"/>
</dbReference>
<dbReference type="RefSeq" id="NP_014832.1">
    <property type="nucleotide sequence ID" value="NM_001183608.1"/>
</dbReference>
<dbReference type="PDB" id="8A5A">
    <property type="method" value="EM"/>
    <property type="resolution" value="3.30 A"/>
    <property type="chains" value="X=1-116"/>
</dbReference>
<dbReference type="PDB" id="8A5O">
    <property type="method" value="EM"/>
    <property type="resolution" value="3.20 A"/>
    <property type="chains" value="X=1-116"/>
</dbReference>
<dbReference type="PDBsum" id="8A5A"/>
<dbReference type="PDBsum" id="8A5O"/>
<dbReference type="EMDB" id="EMD-15163"/>
<dbReference type="EMDB" id="EMD-15177"/>
<dbReference type="EMDB" id="EMD-15179"/>
<dbReference type="EMDB" id="EMD-15186"/>
<dbReference type="SMR" id="Q08561"/>
<dbReference type="BioGRID" id="34584">
    <property type="interactions" value="294"/>
</dbReference>
<dbReference type="ComplexPortal" id="CPX-863">
    <property type="entry name" value="INO80 chromatin remodeling complex"/>
</dbReference>
<dbReference type="DIP" id="DIP-5058N"/>
<dbReference type="FunCoup" id="Q08561">
    <property type="interactions" value="88"/>
</dbReference>
<dbReference type="IntAct" id="Q08561">
    <property type="interactions" value="17"/>
</dbReference>
<dbReference type="MINT" id="Q08561"/>
<dbReference type="STRING" id="4932.YOR189W"/>
<dbReference type="iPTMnet" id="Q08561"/>
<dbReference type="PaxDb" id="4932-YOR189W"/>
<dbReference type="PeptideAtlas" id="Q08561"/>
<dbReference type="EnsemblFungi" id="YOR189W_mRNA">
    <property type="protein sequence ID" value="YOR189W"/>
    <property type="gene ID" value="YOR189W"/>
</dbReference>
<dbReference type="GeneID" id="854361"/>
<dbReference type="KEGG" id="sce:YOR189W"/>
<dbReference type="AGR" id="SGD:S000005715"/>
<dbReference type="SGD" id="S000005715">
    <property type="gene designation" value="IES4"/>
</dbReference>
<dbReference type="VEuPathDB" id="FungiDB:YOR189W"/>
<dbReference type="eggNOG" id="ENOG502SDVQ">
    <property type="taxonomic scope" value="Eukaryota"/>
</dbReference>
<dbReference type="HOGENOM" id="CLU_2098233_0_0_1"/>
<dbReference type="InParanoid" id="Q08561"/>
<dbReference type="OMA" id="PWENSSK"/>
<dbReference type="OrthoDB" id="4054682at2759"/>
<dbReference type="BioCyc" id="YEAST:G3O-33699-MONOMER"/>
<dbReference type="BioGRID-ORCS" id="854361">
    <property type="hits" value="0 hits in 10 CRISPR screens"/>
</dbReference>
<dbReference type="PRO" id="PR:Q08561"/>
<dbReference type="Proteomes" id="UP000002311">
    <property type="component" value="Chromosome XV"/>
</dbReference>
<dbReference type="RNAct" id="Q08561">
    <property type="molecule type" value="protein"/>
</dbReference>
<dbReference type="GO" id="GO:0031011">
    <property type="term" value="C:Ino80 complex"/>
    <property type="evidence" value="ECO:0000314"/>
    <property type="project" value="SGD"/>
</dbReference>
<dbReference type="GO" id="GO:0005634">
    <property type="term" value="C:nucleus"/>
    <property type="evidence" value="ECO:0000314"/>
    <property type="project" value="ComplexPortal"/>
</dbReference>
<dbReference type="GO" id="GO:0006338">
    <property type="term" value="P:chromatin remodeling"/>
    <property type="evidence" value="ECO:0000314"/>
    <property type="project" value="ComplexPortal"/>
</dbReference>
<dbReference type="GO" id="GO:0006974">
    <property type="term" value="P:DNA damage response"/>
    <property type="evidence" value="ECO:0000315"/>
    <property type="project" value="SGD"/>
</dbReference>
<dbReference type="GO" id="GO:0006281">
    <property type="term" value="P:DNA repair"/>
    <property type="evidence" value="ECO:0000303"/>
    <property type="project" value="ComplexPortal"/>
</dbReference>
<dbReference type="GO" id="GO:0006355">
    <property type="term" value="P:regulation of DNA-templated transcription"/>
    <property type="evidence" value="ECO:0000303"/>
    <property type="project" value="ComplexPortal"/>
</dbReference>
<dbReference type="GO" id="GO:0000722">
    <property type="term" value="P:telomere maintenance via recombination"/>
    <property type="evidence" value="ECO:0000316"/>
    <property type="project" value="SGD"/>
</dbReference>
<accession>Q08561</accession>
<accession>D6W2P5</accession>
<gene>
    <name type="primary">IES4</name>
    <name type="ordered locus">YOR189W</name>
</gene>
<evidence type="ECO:0000256" key="1">
    <source>
        <dbReference type="SAM" id="MobiDB-lite"/>
    </source>
</evidence>
<evidence type="ECO:0000269" key="2">
    <source>
    </source>
</evidence>
<evidence type="ECO:0000269" key="3">
    <source>
    </source>
</evidence>
<evidence type="ECO:0000269" key="4">
    <source>
    </source>
</evidence>
<evidence type="ECO:0007829" key="5">
    <source>
        <dbReference type="PDB" id="8A5A"/>
    </source>
</evidence>
<evidence type="ECO:0007829" key="6">
    <source>
        <dbReference type="PDB" id="8A5O"/>
    </source>
</evidence>
<reference key="1">
    <citation type="journal article" date="1997" name="Nature">
        <title>The nucleotide sequence of Saccharomyces cerevisiae chromosome XV.</title>
        <authorList>
            <person name="Dujon B."/>
            <person name="Albermann K."/>
            <person name="Aldea M."/>
            <person name="Alexandraki D."/>
            <person name="Ansorge W."/>
            <person name="Arino J."/>
            <person name="Benes V."/>
            <person name="Bohn C."/>
            <person name="Bolotin-Fukuhara M."/>
            <person name="Bordonne R."/>
            <person name="Boyer J."/>
            <person name="Camasses A."/>
            <person name="Casamayor A."/>
            <person name="Casas C."/>
            <person name="Cheret G."/>
            <person name="Cziepluch C."/>
            <person name="Daignan-Fornier B."/>
            <person name="Dang V.-D."/>
            <person name="de Haan M."/>
            <person name="Delius H."/>
            <person name="Durand P."/>
            <person name="Fairhead C."/>
            <person name="Feldmann H."/>
            <person name="Gaillon L."/>
            <person name="Galisson F."/>
            <person name="Gamo F.-J."/>
            <person name="Gancedo C."/>
            <person name="Goffeau A."/>
            <person name="Goulding S.E."/>
            <person name="Grivell L.A."/>
            <person name="Habbig B."/>
            <person name="Hand N.J."/>
            <person name="Hani J."/>
            <person name="Hattenhorst U."/>
            <person name="Hebling U."/>
            <person name="Hernando Y."/>
            <person name="Herrero E."/>
            <person name="Heumann K."/>
            <person name="Hiesel R."/>
            <person name="Hilger F."/>
            <person name="Hofmann B."/>
            <person name="Hollenberg C.P."/>
            <person name="Hughes B."/>
            <person name="Jauniaux J.-C."/>
            <person name="Kalogeropoulos A."/>
            <person name="Katsoulou C."/>
            <person name="Kordes E."/>
            <person name="Lafuente M.J."/>
            <person name="Landt O."/>
            <person name="Louis E.J."/>
            <person name="Maarse A.C."/>
            <person name="Madania A."/>
            <person name="Mannhaupt G."/>
            <person name="Marck C."/>
            <person name="Martin R.P."/>
            <person name="Mewes H.-W."/>
            <person name="Michaux G."/>
            <person name="Paces V."/>
            <person name="Parle-McDermott A.G."/>
            <person name="Pearson B.M."/>
            <person name="Perrin A."/>
            <person name="Pettersson B."/>
            <person name="Poch O."/>
            <person name="Pohl T.M."/>
            <person name="Poirey R."/>
            <person name="Portetelle D."/>
            <person name="Pujol A."/>
            <person name="Purnelle B."/>
            <person name="Ramezani Rad M."/>
            <person name="Rechmann S."/>
            <person name="Schwager C."/>
            <person name="Schweizer M."/>
            <person name="Sor F."/>
            <person name="Sterky F."/>
            <person name="Tarassov I.A."/>
            <person name="Teodoru C."/>
            <person name="Tettelin H."/>
            <person name="Thierry A."/>
            <person name="Tobiasch E."/>
            <person name="Tzermia M."/>
            <person name="Uhlen M."/>
            <person name="Unseld M."/>
            <person name="Valens M."/>
            <person name="Vandenbol M."/>
            <person name="Vetter I."/>
            <person name="Vlcek C."/>
            <person name="Voet M."/>
            <person name="Volckaert G."/>
            <person name="Voss H."/>
            <person name="Wambutt R."/>
            <person name="Wedler H."/>
            <person name="Wiemann S."/>
            <person name="Winsor B."/>
            <person name="Wolfe K.H."/>
            <person name="Zollner A."/>
            <person name="Zumstein E."/>
            <person name="Kleine K."/>
        </authorList>
    </citation>
    <scope>NUCLEOTIDE SEQUENCE [LARGE SCALE GENOMIC DNA]</scope>
    <source>
        <strain>ATCC 204508 / S288c</strain>
    </source>
</reference>
<reference key="2">
    <citation type="journal article" date="2014" name="G3 (Bethesda)">
        <title>The reference genome sequence of Saccharomyces cerevisiae: Then and now.</title>
        <authorList>
            <person name="Engel S.R."/>
            <person name="Dietrich F.S."/>
            <person name="Fisk D.G."/>
            <person name="Binkley G."/>
            <person name="Balakrishnan R."/>
            <person name="Costanzo M.C."/>
            <person name="Dwight S.S."/>
            <person name="Hitz B.C."/>
            <person name="Karra K."/>
            <person name="Nash R.S."/>
            <person name="Weng S."/>
            <person name="Wong E.D."/>
            <person name="Lloyd P."/>
            <person name="Skrzypek M.S."/>
            <person name="Miyasato S.R."/>
            <person name="Simison M."/>
            <person name="Cherry J.M."/>
        </authorList>
    </citation>
    <scope>GENOME REANNOTATION</scope>
    <source>
        <strain>ATCC 204508 / S288c</strain>
    </source>
</reference>
<reference key="3">
    <citation type="journal article" date="2003" name="Nature">
        <title>Global analysis of protein localization in budding yeast.</title>
        <authorList>
            <person name="Huh W.-K."/>
            <person name="Falvo J.V."/>
            <person name="Gerke L.C."/>
            <person name="Carroll A.S."/>
            <person name="Howson R.W."/>
            <person name="Weissman J.S."/>
            <person name="O'Shea E.K."/>
        </authorList>
    </citation>
    <scope>SUBCELLULAR LOCATION [LARGE SCALE ANALYSIS]</scope>
</reference>
<reference key="4">
    <citation type="journal article" date="2003" name="Nature">
        <title>Global analysis of protein expression in yeast.</title>
        <authorList>
            <person name="Ghaemmaghami S."/>
            <person name="Huh W.-K."/>
            <person name="Bower K."/>
            <person name="Howson R.W."/>
            <person name="Belle A."/>
            <person name="Dephoure N."/>
            <person name="O'Shea E.K."/>
            <person name="Weissman J.S."/>
        </authorList>
    </citation>
    <scope>LEVEL OF PROTEIN EXPRESSION [LARGE SCALE ANALYSIS]</scope>
</reference>
<reference key="5">
    <citation type="journal article" date="2003" name="Mol. Cell">
        <title>Involvement of actin-related proteins in ATP-dependent chromatin remodeling.</title>
        <authorList>
            <person name="Shen X."/>
            <person name="Ranallo R."/>
            <person name="Choi E."/>
            <person name="Wu C."/>
        </authorList>
    </citation>
    <scope>IDENTIFICATION IN THE INO80 COMPLEX</scope>
</reference>
<reference key="6">
    <citation type="journal article" date="2008" name="Mol. Cell. Proteomics">
        <title>A multidimensional chromatography technology for in-depth phosphoproteome analysis.</title>
        <authorList>
            <person name="Albuquerque C.P."/>
            <person name="Smolka M.B."/>
            <person name="Payne S.H."/>
            <person name="Bafna V."/>
            <person name="Eng J."/>
            <person name="Zhou H."/>
        </authorList>
    </citation>
    <scope>IDENTIFICATION BY MASS SPECTROMETRY [LARGE SCALE ANALYSIS]</scope>
</reference>
<comment type="subunit">
    <text evidence="2">Component of the chromatin-remodeling INO80 complex, at least composed of ARP4, ARP5, ARP8, RVB1, RVB2, TAF14, NHP10, IES1, IES3, IES4, IES6, ACT1, IES2, IES5 and INO80.</text>
</comment>
<comment type="subcellular location">
    <subcellularLocation>
        <location evidence="3">Nucleus</location>
    </subcellularLocation>
</comment>
<comment type="miscellaneous">
    <text evidence="4">Present with 538 molecules/cell in log phase SD medium.</text>
</comment>
<sequence>MSQESSVLSESQEQLANNPKIEDTSPPSANSRDNSKPVLPWDYKNKAIEIKSFSGYKVNFTGWIRRDVREERQRGSEFTASDVKGSDDKATRKKEPADEDPEVKQLEKEGEDGLDS</sequence>
<keyword id="KW-0002">3D-structure</keyword>
<keyword id="KW-0539">Nucleus</keyword>
<keyword id="KW-1185">Reference proteome</keyword>
<protein>
    <recommendedName>
        <fullName>Ino eighty subunit 4</fullName>
    </recommendedName>
</protein>
<name>IES4_YEAST</name>
<organism>
    <name type="scientific">Saccharomyces cerevisiae (strain ATCC 204508 / S288c)</name>
    <name type="common">Baker's yeast</name>
    <dbReference type="NCBI Taxonomy" id="559292"/>
    <lineage>
        <taxon>Eukaryota</taxon>
        <taxon>Fungi</taxon>
        <taxon>Dikarya</taxon>
        <taxon>Ascomycota</taxon>
        <taxon>Saccharomycotina</taxon>
        <taxon>Saccharomycetes</taxon>
        <taxon>Saccharomycetales</taxon>
        <taxon>Saccharomycetaceae</taxon>
        <taxon>Saccharomyces</taxon>
    </lineage>
</organism>
<feature type="chain" id="PRO_0000084156" description="Ino eighty subunit 4">
    <location>
        <begin position="1"/>
        <end position="116"/>
    </location>
</feature>
<feature type="region of interest" description="Disordered" evidence="1">
    <location>
        <begin position="1"/>
        <end position="40"/>
    </location>
</feature>
<feature type="region of interest" description="Disordered" evidence="1">
    <location>
        <begin position="70"/>
        <end position="116"/>
    </location>
</feature>
<feature type="compositionally biased region" description="Low complexity" evidence="1">
    <location>
        <begin position="1"/>
        <end position="15"/>
    </location>
</feature>
<feature type="compositionally biased region" description="Basic and acidic residues" evidence="1">
    <location>
        <begin position="84"/>
        <end position="108"/>
    </location>
</feature>
<feature type="strand" evidence="6">
    <location>
        <begin position="41"/>
        <end position="51"/>
    </location>
</feature>
<feature type="strand" evidence="6">
    <location>
        <begin position="57"/>
        <end position="65"/>
    </location>
</feature>
<feature type="helix" evidence="5">
    <location>
        <begin position="66"/>
        <end position="72"/>
    </location>
</feature>